<name>Y1043_CHLAA</name>
<accession>A9WIH5</accession>
<proteinExistence type="inferred from homology"/>
<keyword id="KW-0963">Cytoplasm</keyword>
<keyword id="KW-0238">DNA-binding</keyword>
<keyword id="KW-1185">Reference proteome</keyword>
<keyword id="KW-0804">Transcription</keyword>
<keyword id="KW-0805">Transcription regulation</keyword>
<organism>
    <name type="scientific">Chloroflexus aurantiacus (strain ATCC 29366 / DSM 635 / J-10-fl)</name>
    <dbReference type="NCBI Taxonomy" id="324602"/>
    <lineage>
        <taxon>Bacteria</taxon>
        <taxon>Bacillati</taxon>
        <taxon>Chloroflexota</taxon>
        <taxon>Chloroflexia</taxon>
        <taxon>Chloroflexales</taxon>
        <taxon>Chloroflexineae</taxon>
        <taxon>Chloroflexaceae</taxon>
        <taxon>Chloroflexus</taxon>
    </lineage>
</organism>
<reference key="1">
    <citation type="journal article" date="2011" name="BMC Genomics">
        <title>Complete genome sequence of the filamentous anoxygenic phototrophic bacterium Chloroflexus aurantiacus.</title>
        <authorList>
            <person name="Tang K.H."/>
            <person name="Barry K."/>
            <person name="Chertkov O."/>
            <person name="Dalin E."/>
            <person name="Han C.S."/>
            <person name="Hauser L.J."/>
            <person name="Honchak B.M."/>
            <person name="Karbach L.E."/>
            <person name="Land M.L."/>
            <person name="Lapidus A."/>
            <person name="Larimer F.W."/>
            <person name="Mikhailova N."/>
            <person name="Pitluck S."/>
            <person name="Pierson B.K."/>
            <person name="Blankenship R.E."/>
        </authorList>
    </citation>
    <scope>NUCLEOTIDE SEQUENCE [LARGE SCALE GENOMIC DNA]</scope>
    <source>
        <strain>ATCC 29366 / DSM 635 / J-10-fl</strain>
    </source>
</reference>
<dbReference type="EMBL" id="CP000909">
    <property type="protein sequence ID" value="ABY34275.1"/>
    <property type="molecule type" value="Genomic_DNA"/>
</dbReference>
<dbReference type="RefSeq" id="WP_012256931.1">
    <property type="nucleotide sequence ID" value="NC_010175.1"/>
</dbReference>
<dbReference type="RefSeq" id="YP_001634664.1">
    <property type="nucleotide sequence ID" value="NC_010175.1"/>
</dbReference>
<dbReference type="SMR" id="A9WIH5"/>
<dbReference type="FunCoup" id="A9WIH5">
    <property type="interactions" value="434"/>
</dbReference>
<dbReference type="STRING" id="324602.Caur_1043"/>
<dbReference type="EnsemblBacteria" id="ABY34275">
    <property type="protein sequence ID" value="ABY34275"/>
    <property type="gene ID" value="Caur_1043"/>
</dbReference>
<dbReference type="KEGG" id="cau:Caur_1043"/>
<dbReference type="PATRIC" id="fig|324602.8.peg.1189"/>
<dbReference type="eggNOG" id="COG0217">
    <property type="taxonomic scope" value="Bacteria"/>
</dbReference>
<dbReference type="HOGENOM" id="CLU_062974_2_2_0"/>
<dbReference type="InParanoid" id="A9WIH5"/>
<dbReference type="Proteomes" id="UP000002008">
    <property type="component" value="Chromosome"/>
</dbReference>
<dbReference type="GO" id="GO:0005829">
    <property type="term" value="C:cytosol"/>
    <property type="evidence" value="ECO:0000318"/>
    <property type="project" value="GO_Central"/>
</dbReference>
<dbReference type="GO" id="GO:0003677">
    <property type="term" value="F:DNA binding"/>
    <property type="evidence" value="ECO:0007669"/>
    <property type="project" value="UniProtKB-UniRule"/>
</dbReference>
<dbReference type="GO" id="GO:0006355">
    <property type="term" value="P:regulation of DNA-templated transcription"/>
    <property type="evidence" value="ECO:0007669"/>
    <property type="project" value="UniProtKB-UniRule"/>
</dbReference>
<dbReference type="FunFam" id="1.10.10.200:FF:000002">
    <property type="entry name" value="Probable transcriptional regulatory protein CLM62_37755"/>
    <property type="match status" value="1"/>
</dbReference>
<dbReference type="Gene3D" id="1.10.10.200">
    <property type="match status" value="1"/>
</dbReference>
<dbReference type="Gene3D" id="3.30.70.980">
    <property type="match status" value="2"/>
</dbReference>
<dbReference type="HAMAP" id="MF_00693">
    <property type="entry name" value="Transcrip_reg_TACO1"/>
    <property type="match status" value="1"/>
</dbReference>
<dbReference type="InterPro" id="IPR017856">
    <property type="entry name" value="Integrase-like_N"/>
</dbReference>
<dbReference type="InterPro" id="IPR048300">
    <property type="entry name" value="TACO1_YebC-like_2nd/3rd_dom"/>
</dbReference>
<dbReference type="InterPro" id="IPR049083">
    <property type="entry name" value="TACO1_YebC_N"/>
</dbReference>
<dbReference type="InterPro" id="IPR002876">
    <property type="entry name" value="Transcrip_reg_TACO1-like"/>
</dbReference>
<dbReference type="InterPro" id="IPR026564">
    <property type="entry name" value="Transcrip_reg_TACO1-like_dom3"/>
</dbReference>
<dbReference type="InterPro" id="IPR029072">
    <property type="entry name" value="YebC-like"/>
</dbReference>
<dbReference type="NCBIfam" id="NF001030">
    <property type="entry name" value="PRK00110.1"/>
    <property type="match status" value="1"/>
</dbReference>
<dbReference type="NCBIfam" id="NF009044">
    <property type="entry name" value="PRK12378.1"/>
    <property type="match status" value="1"/>
</dbReference>
<dbReference type="NCBIfam" id="TIGR01033">
    <property type="entry name" value="YebC/PmpR family DNA-binding transcriptional regulator"/>
    <property type="match status" value="1"/>
</dbReference>
<dbReference type="PANTHER" id="PTHR12532:SF6">
    <property type="entry name" value="TRANSCRIPTIONAL REGULATORY PROTEIN YEBC-RELATED"/>
    <property type="match status" value="1"/>
</dbReference>
<dbReference type="PANTHER" id="PTHR12532">
    <property type="entry name" value="TRANSLATIONAL ACTIVATOR OF CYTOCHROME C OXIDASE 1"/>
    <property type="match status" value="1"/>
</dbReference>
<dbReference type="Pfam" id="PF20772">
    <property type="entry name" value="TACO1_YebC_N"/>
    <property type="match status" value="1"/>
</dbReference>
<dbReference type="Pfam" id="PF01709">
    <property type="entry name" value="Transcrip_reg"/>
    <property type="match status" value="1"/>
</dbReference>
<dbReference type="SUPFAM" id="SSF75625">
    <property type="entry name" value="YebC-like"/>
    <property type="match status" value="1"/>
</dbReference>
<sequence length="252" mass="27887">MSGHSKWHTIRRTKGVNDQRRGQLFTKLARDITIATREGGSGDPDLNFRLRLAIEKARANNMPNENIQRAIDRGLGKSNEAALEEIFYEGYGPGGVAILIEAATDNRNRTNSEVRATFNKNGGNPGEPGSVSWMFEQKGLITIDLSAVKHDPDELQLMAIDAGADDVVVDDETLEIYCDWTQLNAIRQALLDQGVPVANAEKIMRAKTLIQPDEKDALAALRLIEKLEDLDDVQKVYSNLDITAELVARFDA</sequence>
<gene>
    <name type="ordered locus">Caur_1043</name>
</gene>
<feature type="chain" id="PRO_1000083147" description="Probable transcriptional regulatory protein Caur_1043">
    <location>
        <begin position="1"/>
        <end position="252"/>
    </location>
</feature>
<feature type="region of interest" description="Disordered" evidence="2">
    <location>
        <begin position="1"/>
        <end position="22"/>
    </location>
</feature>
<feature type="compositionally biased region" description="Basic residues" evidence="2">
    <location>
        <begin position="1"/>
        <end position="14"/>
    </location>
</feature>
<comment type="subcellular location">
    <subcellularLocation>
        <location evidence="1">Cytoplasm</location>
    </subcellularLocation>
</comment>
<comment type="similarity">
    <text evidence="1">Belongs to the TACO1 family.</text>
</comment>
<protein>
    <recommendedName>
        <fullName evidence="1">Probable transcriptional regulatory protein Caur_1043</fullName>
    </recommendedName>
</protein>
<evidence type="ECO:0000255" key="1">
    <source>
        <dbReference type="HAMAP-Rule" id="MF_00693"/>
    </source>
</evidence>
<evidence type="ECO:0000256" key="2">
    <source>
        <dbReference type="SAM" id="MobiDB-lite"/>
    </source>
</evidence>